<keyword id="KW-0020">Allergen</keyword>
<keyword id="KW-0903">Direct protein sequencing</keyword>
<reference key="1">
    <citation type="submission" date="1997-07" db="UniProtKB">
        <authorList>
            <person name="Verma J."/>
            <person name="Gangal S.V."/>
        </authorList>
    </citation>
    <scope>PROTEIN SEQUENCE</scope>
    <source>
        <strain>IARI 3596</strain>
        <tissue>Mycelium</tissue>
    </source>
</reference>
<reference key="2">
    <citation type="journal article" date="1994" name="Mol. Cell. Biochem.">
        <title>Purification and characterization of Fus sI3596*, a 65 kd allergen of Fusarium solani.</title>
        <authorList>
            <person name="Verma J."/>
            <person name="Pasha S."/>
            <person name="Gangal S.V."/>
        </authorList>
    </citation>
    <scope>IDENTIFICATION</scope>
    <scope>ALLERGEN</scope>
    <scope>BLOCKAGE OF N-TERMINUS</scope>
    <scope>GLYCOSYLATION</scope>
</reference>
<evidence type="ECO:0000269" key="1">
    <source>
    </source>
</evidence>
<dbReference type="Allergome" id="735">
    <property type="allergen name" value="Fus s 1"/>
</dbReference>
<sequence length="8" mass="898">TIMSHNVP</sequence>
<comment type="PTM">
    <text>The N-terminus is blocked.</text>
</comment>
<comment type="PTM">
    <text evidence="1">Glycosylated.</text>
</comment>
<comment type="allergen">
    <text evidence="1">Causes an allergic reaction in human.</text>
</comment>
<comment type="miscellaneous">
    <text>The MW of the complete protein is 65 kDa with a pI of 3.6.</text>
</comment>
<proteinExistence type="evidence at protein level"/>
<name>FUSS_FUSVN</name>
<protein>
    <recommendedName>
        <fullName>Allergen Fus s I3596*</fullName>
    </recommendedName>
    <allergenName>Fus s 1</allergenName>
</protein>
<accession>P81010</accession>
<feature type="chain" id="PRO_0000087387" description="Allergen Fus s I3596*">
    <location>
        <begin position="1"/>
        <end position="8" status="greater than"/>
    </location>
</feature>
<feature type="non-terminal residue">
    <location>
        <position position="8"/>
    </location>
</feature>
<organism>
    <name type="scientific">Fusarium vanettenii</name>
    <name type="common">Neocosmospora pisi</name>
    <dbReference type="NCBI Taxonomy" id="2747968"/>
    <lineage>
        <taxon>Eukaryota</taxon>
        <taxon>Fungi</taxon>
        <taxon>Dikarya</taxon>
        <taxon>Ascomycota</taxon>
        <taxon>Pezizomycotina</taxon>
        <taxon>Sordariomycetes</taxon>
        <taxon>Hypocreomycetidae</taxon>
        <taxon>Hypocreales</taxon>
        <taxon>Nectriaceae</taxon>
        <taxon>Fusarium</taxon>
        <taxon>Fusarium solani species complex</taxon>
    </lineage>
</organism>